<accession>Q7T3S7</accession>
<protein>
    <recommendedName>
        <fullName>Acidic phospholipase A2 EC-I</fullName>
        <shortName>EC-I-PLA2</shortName>
        <shortName>svPLA2</shortName>
        <ecNumber>3.1.1.4</ecNumber>
    </recommendedName>
    <alternativeName>
        <fullName>Phosphatidylcholine 2-acylhydrolase</fullName>
    </alternativeName>
</protein>
<reference key="1">
    <citation type="journal article" date="2004" name="Acta Crystallogr. D">
        <title>Structure of an acidic phospholipase A2 from Indian saw-scaled viper (Echis carinatus) at 2.6 A resolution reveals a novel intermolecular interaction.</title>
        <authorList>
            <person name="Jasti J."/>
            <person name="Paramasivam M."/>
            <person name="Srinivasan A."/>
            <person name="Singh T.P."/>
        </authorList>
    </citation>
    <scope>NUCLEOTIDE SEQUENCE [MRNA]</scope>
    <scope>PARTIAL PROTEIN SEQUENCE</scope>
    <scope>X-RAY CRYSTALLOGRAPHY (2.6 ANGSTROMS) OF 17-136 IN COMPLEX WITH CALCIUM ION</scope>
    <scope>COFACTOR</scope>
    <scope>SUBUNIT</scope>
    <scope>DISULFIDE BONDS</scope>
    <source>
        <tissue>Venom</tissue>
        <tissue>Venom gland</tissue>
    </source>
</reference>
<reference key="2">
    <citation type="journal article" date="1999" name="Toxicon">
        <title>Purification and characterization of a platelet aggregation inhibitor acidic phospholipase A2 from Indian saw-scaled viper (Echis carinatus) venom.</title>
        <authorList>
            <person name="Kemparaju K."/>
            <person name="Krishnakanth T.P."/>
            <person name="Veerabasappa Gowda T."/>
        </authorList>
    </citation>
    <scope>FUNCTION</scope>
    <scope>BIOPHYSICOCHEMICAL PROPERTIES</scope>
    <source>
        <tissue>Venom</tissue>
    </source>
</reference>
<feature type="signal peptide">
    <location>
        <begin position="1"/>
        <end position="16"/>
    </location>
</feature>
<feature type="chain" id="PRO_0000419211" description="Acidic phospholipase A2 EC-I">
    <location>
        <begin position="17"/>
        <end position="136"/>
    </location>
</feature>
<feature type="region of interest" description="May be responsible for inhibition of the platelet-aggregation activity">
    <location>
        <begin position="112"/>
        <end position="133"/>
    </location>
</feature>
<feature type="active site" evidence="1">
    <location>
        <position position="63"/>
    </location>
</feature>
<feature type="active site" evidence="1">
    <location>
        <position position="105"/>
    </location>
</feature>
<feature type="binding site" evidence="5 9">
    <location>
        <position position="43"/>
    </location>
    <ligand>
        <name>Ca(2+)</name>
        <dbReference type="ChEBI" id="CHEBI:29108"/>
    </ligand>
</feature>
<feature type="binding site" evidence="5 9">
    <location>
        <position position="45"/>
    </location>
    <ligand>
        <name>Ca(2+)</name>
        <dbReference type="ChEBI" id="CHEBI:29108"/>
    </ligand>
</feature>
<feature type="binding site" evidence="5 9">
    <location>
        <position position="47"/>
    </location>
    <ligand>
        <name>Ca(2+)</name>
        <dbReference type="ChEBI" id="CHEBI:29108"/>
    </ligand>
</feature>
<feature type="binding site" evidence="5 9">
    <location>
        <position position="64"/>
    </location>
    <ligand>
        <name>Ca(2+)</name>
        <dbReference type="ChEBI" id="CHEBI:29108"/>
    </ligand>
</feature>
<feature type="disulfide bond" evidence="5 9">
    <location>
        <begin position="42"/>
        <end position="129"/>
    </location>
</feature>
<feature type="disulfide bond" evidence="5 9">
    <location>
        <begin position="44"/>
        <end position="60"/>
    </location>
</feature>
<feature type="disulfide bond" evidence="5 9">
    <location>
        <begin position="59"/>
        <end position="111"/>
    </location>
</feature>
<feature type="disulfide bond" evidence="5 9">
    <location>
        <begin position="65"/>
        <end position="136"/>
    </location>
</feature>
<feature type="disulfide bond" evidence="5 9">
    <location>
        <begin position="66"/>
        <end position="104"/>
    </location>
</feature>
<feature type="disulfide bond" evidence="5 9">
    <location>
        <begin position="73"/>
        <end position="97"/>
    </location>
</feature>
<feature type="disulfide bond" evidence="5 9">
    <location>
        <begin position="91"/>
        <end position="102"/>
    </location>
</feature>
<feature type="helix" evidence="10">
    <location>
        <begin position="18"/>
        <end position="29"/>
    </location>
</feature>
<feature type="helix" evidence="10">
    <location>
        <begin position="33"/>
        <end position="37"/>
    </location>
</feature>
<feature type="turn" evidence="10">
    <location>
        <begin position="41"/>
        <end position="44"/>
    </location>
</feature>
<feature type="strand" evidence="10">
    <location>
        <begin position="45"/>
        <end position="47"/>
    </location>
</feature>
<feature type="helix" evidence="10">
    <location>
        <begin position="55"/>
        <end position="69"/>
    </location>
</feature>
<feature type="turn" evidence="10">
    <location>
        <begin position="75"/>
        <end position="77"/>
    </location>
</feature>
<feature type="strand" evidence="10">
    <location>
        <begin position="82"/>
        <end position="85"/>
    </location>
</feature>
<feature type="strand" evidence="10">
    <location>
        <begin position="88"/>
        <end position="91"/>
    </location>
</feature>
<feature type="helix" evidence="10">
    <location>
        <begin position="96"/>
        <end position="113"/>
    </location>
</feature>
<feature type="helix" evidence="10">
    <location>
        <begin position="116"/>
        <end position="118"/>
    </location>
</feature>
<feature type="helix" evidence="10">
    <location>
        <begin position="121"/>
        <end position="124"/>
    </location>
</feature>
<organism>
    <name type="scientific">Echis carinatus</name>
    <name type="common">Saw-scaled viper</name>
    <dbReference type="NCBI Taxonomy" id="40353"/>
    <lineage>
        <taxon>Eukaryota</taxon>
        <taxon>Metazoa</taxon>
        <taxon>Chordata</taxon>
        <taxon>Craniata</taxon>
        <taxon>Vertebrata</taxon>
        <taxon>Euteleostomi</taxon>
        <taxon>Lepidosauria</taxon>
        <taxon>Squamata</taxon>
        <taxon>Bifurcata</taxon>
        <taxon>Unidentata</taxon>
        <taxon>Episquamata</taxon>
        <taxon>Toxicofera</taxon>
        <taxon>Serpentes</taxon>
        <taxon>Colubroidea</taxon>
        <taxon>Viperidae</taxon>
        <taxon>Viperinae</taxon>
        <taxon>Echis</taxon>
    </lineage>
</organism>
<keyword id="KW-0002">3D-structure</keyword>
<keyword id="KW-0106">Calcium</keyword>
<keyword id="KW-0903">Direct protein sequencing</keyword>
<keyword id="KW-1015">Disulfide bond</keyword>
<keyword id="KW-1199">Hemostasis impairing toxin</keyword>
<keyword id="KW-0378">Hydrolase</keyword>
<keyword id="KW-0442">Lipid degradation</keyword>
<keyword id="KW-0443">Lipid metabolism</keyword>
<keyword id="KW-0479">Metal-binding</keyword>
<keyword id="KW-1201">Platelet aggregation inhibiting toxin</keyword>
<keyword id="KW-0964">Secreted</keyword>
<keyword id="KW-0732">Signal</keyword>
<keyword id="KW-0800">Toxin</keyword>
<dbReference type="EC" id="3.1.1.4"/>
<dbReference type="EMBL" id="AY268946">
    <property type="protein sequence ID" value="AAP41217.1"/>
    <property type="molecule type" value="mRNA"/>
</dbReference>
<dbReference type="PDB" id="1OZ6">
    <property type="method" value="X-ray"/>
    <property type="resolution" value="2.60 A"/>
    <property type="chains" value="A=17-136"/>
</dbReference>
<dbReference type="PDBsum" id="1OZ6"/>
<dbReference type="SMR" id="Q7T3S7"/>
<dbReference type="BindingDB" id="Q7T3S7"/>
<dbReference type="ChEMBL" id="CHEMBL4195"/>
<dbReference type="SABIO-RK" id="Q7T3S7"/>
<dbReference type="EvolutionaryTrace" id="Q7T3S7"/>
<dbReference type="GO" id="GO:0005576">
    <property type="term" value="C:extracellular region"/>
    <property type="evidence" value="ECO:0007669"/>
    <property type="project" value="UniProtKB-SubCell"/>
</dbReference>
<dbReference type="GO" id="GO:0005509">
    <property type="term" value="F:calcium ion binding"/>
    <property type="evidence" value="ECO:0007669"/>
    <property type="project" value="InterPro"/>
</dbReference>
<dbReference type="GO" id="GO:0047498">
    <property type="term" value="F:calcium-dependent phospholipase A2 activity"/>
    <property type="evidence" value="ECO:0007669"/>
    <property type="project" value="TreeGrafter"/>
</dbReference>
<dbReference type="GO" id="GO:0005543">
    <property type="term" value="F:phospholipid binding"/>
    <property type="evidence" value="ECO:0007669"/>
    <property type="project" value="TreeGrafter"/>
</dbReference>
<dbReference type="GO" id="GO:0090729">
    <property type="term" value="F:toxin activity"/>
    <property type="evidence" value="ECO:0007669"/>
    <property type="project" value="UniProtKB-KW"/>
</dbReference>
<dbReference type="GO" id="GO:0050482">
    <property type="term" value="P:arachidonate secretion"/>
    <property type="evidence" value="ECO:0007669"/>
    <property type="project" value="InterPro"/>
</dbReference>
<dbReference type="GO" id="GO:0016042">
    <property type="term" value="P:lipid catabolic process"/>
    <property type="evidence" value="ECO:0007669"/>
    <property type="project" value="UniProtKB-KW"/>
</dbReference>
<dbReference type="GO" id="GO:0042130">
    <property type="term" value="P:negative regulation of T cell proliferation"/>
    <property type="evidence" value="ECO:0007669"/>
    <property type="project" value="TreeGrafter"/>
</dbReference>
<dbReference type="GO" id="GO:0006644">
    <property type="term" value="P:phospholipid metabolic process"/>
    <property type="evidence" value="ECO:0007669"/>
    <property type="project" value="InterPro"/>
</dbReference>
<dbReference type="CDD" id="cd00125">
    <property type="entry name" value="PLA2c"/>
    <property type="match status" value="1"/>
</dbReference>
<dbReference type="FunFam" id="1.20.90.10:FF:000001">
    <property type="entry name" value="Basic phospholipase A2 homolog"/>
    <property type="match status" value="1"/>
</dbReference>
<dbReference type="Gene3D" id="1.20.90.10">
    <property type="entry name" value="Phospholipase A2 domain"/>
    <property type="match status" value="1"/>
</dbReference>
<dbReference type="InterPro" id="IPR001211">
    <property type="entry name" value="PLipase_A2"/>
</dbReference>
<dbReference type="InterPro" id="IPR033112">
    <property type="entry name" value="PLipase_A2_Asp_AS"/>
</dbReference>
<dbReference type="InterPro" id="IPR016090">
    <property type="entry name" value="PLipase_A2_dom"/>
</dbReference>
<dbReference type="InterPro" id="IPR036444">
    <property type="entry name" value="PLipase_A2_dom_sf"/>
</dbReference>
<dbReference type="InterPro" id="IPR033113">
    <property type="entry name" value="PLipase_A2_His_AS"/>
</dbReference>
<dbReference type="PANTHER" id="PTHR11716">
    <property type="entry name" value="PHOSPHOLIPASE A2 FAMILY MEMBER"/>
    <property type="match status" value="1"/>
</dbReference>
<dbReference type="PANTHER" id="PTHR11716:SF9">
    <property type="entry name" value="PHOSPHOLIPASE A2, MEMBRANE ASSOCIATED"/>
    <property type="match status" value="1"/>
</dbReference>
<dbReference type="Pfam" id="PF00068">
    <property type="entry name" value="Phospholip_A2_1"/>
    <property type="match status" value="1"/>
</dbReference>
<dbReference type="PRINTS" id="PR00389">
    <property type="entry name" value="PHPHLIPASEA2"/>
</dbReference>
<dbReference type="SMART" id="SM00085">
    <property type="entry name" value="PA2c"/>
    <property type="match status" value="1"/>
</dbReference>
<dbReference type="SUPFAM" id="SSF48619">
    <property type="entry name" value="Phospholipase A2, PLA2"/>
    <property type="match status" value="1"/>
</dbReference>
<dbReference type="PROSITE" id="PS00119">
    <property type="entry name" value="PA2_ASP"/>
    <property type="match status" value="1"/>
</dbReference>
<dbReference type="PROSITE" id="PS00118">
    <property type="entry name" value="PA2_HIS"/>
    <property type="match status" value="1"/>
</dbReference>
<comment type="function">
    <text evidence="4">Snake venom phospholipase A2 (PLA2) that inhibits human platelet aggregation induced by ADP, collagen and epinephrin (possibly by binding the platelet receptor alpha-IIb/beta-III) and induces mild edema in the foot pads of mice. PLA2 catalyzes the calcium-dependent hydrolysis of the 2-acyl groups in 3-sn-phosphoglycerides.</text>
</comment>
<comment type="catalytic activity">
    <reaction evidence="2 3">
        <text>a 1,2-diacyl-sn-glycero-3-phosphocholine + H2O = a 1-acyl-sn-glycero-3-phosphocholine + a fatty acid + H(+)</text>
        <dbReference type="Rhea" id="RHEA:15801"/>
        <dbReference type="ChEBI" id="CHEBI:15377"/>
        <dbReference type="ChEBI" id="CHEBI:15378"/>
        <dbReference type="ChEBI" id="CHEBI:28868"/>
        <dbReference type="ChEBI" id="CHEBI:57643"/>
        <dbReference type="ChEBI" id="CHEBI:58168"/>
        <dbReference type="EC" id="3.1.1.4"/>
    </reaction>
</comment>
<comment type="cofactor">
    <cofactor evidence="8">
        <name>Ca(2+)</name>
        <dbReference type="ChEBI" id="CHEBI:29108"/>
    </cofactor>
    <text evidence="8">Binds 1 Ca(2+) ion.</text>
</comment>
<comment type="biophysicochemical properties">
    <kinetics>
        <KM evidence="4">1.66 mM for phospholipids</KM>
    </kinetics>
    <phDependence>
        <text evidence="4">Optimum pH is 7.5.</text>
    </phDependence>
    <temperatureDependence>
        <text evidence="4">Optimum temperature is 37 degrees Celsius.</text>
    </temperatureDependence>
</comment>
<comment type="subunit">
    <text evidence="5">Monomer.</text>
</comment>
<comment type="subcellular location">
    <subcellularLocation>
        <location>Secreted</location>
    </subcellularLocation>
</comment>
<comment type="tissue specificity">
    <text>Expressed by the venom gland.</text>
</comment>
<comment type="miscellaneous">
    <text evidence="7">Is non-lethal to mice and devoid of neurotoxicity, myotoxicity, hemorrhage, anticoagulant activity and cytotoxicity.</text>
</comment>
<comment type="similarity">
    <text evidence="6">Belongs to the phospholipase A2 family. Group II subfamily. D49 sub-subfamily.</text>
</comment>
<name>PA2A1_ECHCA</name>
<evidence type="ECO:0000250" key="1">
    <source>
        <dbReference type="UniProtKB" id="P14418"/>
    </source>
</evidence>
<evidence type="ECO:0000255" key="2">
    <source>
        <dbReference type="PROSITE-ProRule" id="PRU10035"/>
    </source>
</evidence>
<evidence type="ECO:0000255" key="3">
    <source>
        <dbReference type="PROSITE-ProRule" id="PRU10036"/>
    </source>
</evidence>
<evidence type="ECO:0000269" key="4">
    <source>
    </source>
</evidence>
<evidence type="ECO:0000269" key="5">
    <source>
    </source>
</evidence>
<evidence type="ECO:0000305" key="6"/>
<evidence type="ECO:0000305" key="7">
    <source>
    </source>
</evidence>
<evidence type="ECO:0000305" key="8">
    <source>
    </source>
</evidence>
<evidence type="ECO:0007744" key="9">
    <source>
        <dbReference type="PDB" id="1OZ6"/>
    </source>
</evidence>
<evidence type="ECO:0007829" key="10">
    <source>
        <dbReference type="PDB" id="1OZ6"/>
    </source>
</evidence>
<sequence>MKTLWIVAVWLIAVEGNLYQFGRMIWNRTGKLPILSYGSYGCYCGWGGQGPPKDATDRCCLVHDCCYTRVGDCSPKMTLYSYRFENGDIICDNKDPCKRAVCECDREAAICLGENVNTYDKKYKSYEDCTEEVQEC</sequence>
<proteinExistence type="evidence at protein level"/>